<keyword id="KW-0025">Alternative splicing</keyword>
<keyword id="KW-0040">ANK repeat</keyword>
<keyword id="KW-1003">Cell membrane</keyword>
<keyword id="KW-0175">Coiled coil</keyword>
<keyword id="KW-0963">Cytoplasm</keyword>
<keyword id="KW-0333">Golgi apparatus</keyword>
<keyword id="KW-0343">GTPase activation</keyword>
<keyword id="KW-0472">Membrane</keyword>
<keyword id="KW-0479">Metal-binding</keyword>
<keyword id="KW-0597">Phosphoprotein</keyword>
<keyword id="KW-1267">Proteomics identification</keyword>
<keyword id="KW-1185">Reference proteome</keyword>
<keyword id="KW-0677">Repeat</keyword>
<keyword id="KW-0728">SH3 domain</keyword>
<keyword id="KW-0862">Zinc</keyword>
<feature type="chain" id="PRO_0000074198" description="Arf-GAP with SH3 domain, ANK repeat and PH domain-containing protein 2">
    <location>
        <begin position="1"/>
        <end position="1006"/>
    </location>
</feature>
<feature type="domain" description="PH" evidence="2">
    <location>
        <begin position="305"/>
        <end position="397"/>
    </location>
</feature>
<feature type="domain" description="Arf-GAP" evidence="4">
    <location>
        <begin position="421"/>
        <end position="543"/>
    </location>
</feature>
<feature type="repeat" description="ANK 1">
    <location>
        <begin position="584"/>
        <end position="616"/>
    </location>
</feature>
<feature type="repeat" description="ANK 2">
    <location>
        <begin position="620"/>
        <end position="649"/>
    </location>
</feature>
<feature type="domain" description="SH3" evidence="3">
    <location>
        <begin position="944"/>
        <end position="1006"/>
    </location>
</feature>
<feature type="region of interest" description="Disordered" evidence="5">
    <location>
        <begin position="288"/>
        <end position="312"/>
    </location>
</feature>
<feature type="region of interest" description="Disordered" evidence="5">
    <location>
        <begin position="701"/>
        <end position="720"/>
    </location>
</feature>
<feature type="region of interest" description="Disordered" evidence="5">
    <location>
        <begin position="764"/>
        <end position="916"/>
    </location>
</feature>
<feature type="coiled-coil region" evidence="1">
    <location>
        <begin position="256"/>
        <end position="283"/>
    </location>
</feature>
<feature type="coiled-coil region" evidence="1">
    <location>
        <begin position="729"/>
        <end position="752"/>
    </location>
</feature>
<feature type="compositionally biased region" description="Polar residues" evidence="5">
    <location>
        <begin position="288"/>
        <end position="300"/>
    </location>
</feature>
<feature type="compositionally biased region" description="Polar residues" evidence="5">
    <location>
        <begin position="794"/>
        <end position="823"/>
    </location>
</feature>
<feature type="compositionally biased region" description="Pro residues" evidence="5">
    <location>
        <begin position="865"/>
        <end position="886"/>
    </location>
</feature>
<feature type="modified residue" description="Phosphoserine" evidence="12 13 15 16 17">
    <location>
        <position position="701"/>
    </location>
</feature>
<feature type="modified residue" description="Phosphoserine" evidence="14">
    <location>
        <position position="822"/>
    </location>
</feature>
<feature type="modified residue" description="Phosphothreonine" evidence="16">
    <location>
        <position position="903"/>
    </location>
</feature>
<feature type="splice variant" id="VSP_009722" description="In isoform 2." evidence="10">
    <original>VQTASSANTLWKTNSVSVDGGSRQRSSSDPPAVHPPLPPLRVTSTN</original>
    <variation>D</variation>
    <location>
        <begin position="795"/>
        <end position="840"/>
    </location>
</feature>
<feature type="sequence variant" id="VAR_020307" description="In dbSNP:rs2715860." evidence="9">
    <original>E</original>
    <variation>D</variation>
    <location>
        <position position="748"/>
    </location>
</feature>
<feature type="mutagenesis site" description="Loss of Arf-GAP activity." evidence="7">
    <original>C</original>
    <variation>A</variation>
    <location>
        <position position="436"/>
    </location>
</feature>
<feature type="sequence conflict" description="In Ref. 3; AAH63308." evidence="11" ref="3">
    <original>C</original>
    <variation>R</variation>
    <location>
        <position position="86"/>
    </location>
</feature>
<dbReference type="EMBL" id="AB007860">
    <property type="protein sequence ID" value="BAA23696.2"/>
    <property type="status" value="ALT_INIT"/>
    <property type="molecule type" value="mRNA"/>
</dbReference>
<dbReference type="EMBL" id="CH471053">
    <property type="protein sequence ID" value="EAX01004.1"/>
    <property type="molecule type" value="Genomic_DNA"/>
</dbReference>
<dbReference type="EMBL" id="CH471053">
    <property type="protein sequence ID" value="EAX01006.1"/>
    <property type="molecule type" value="Genomic_DNA"/>
</dbReference>
<dbReference type="EMBL" id="BC063308">
    <property type="protein sequence ID" value="AAH63308.1"/>
    <property type="molecule type" value="mRNA"/>
</dbReference>
<dbReference type="CCDS" id="CCDS1661.1">
    <molecule id="O43150-1"/>
</dbReference>
<dbReference type="CCDS" id="CCDS46224.1">
    <molecule id="O43150-2"/>
</dbReference>
<dbReference type="PIR" id="T00050">
    <property type="entry name" value="T00050"/>
</dbReference>
<dbReference type="RefSeq" id="NP_001128663.1">
    <molecule id="O43150-2"/>
    <property type="nucleotide sequence ID" value="NM_001135191.2"/>
</dbReference>
<dbReference type="RefSeq" id="NP_003878.1">
    <molecule id="O43150-1"/>
    <property type="nucleotide sequence ID" value="NM_003887.3"/>
</dbReference>
<dbReference type="SMR" id="O43150"/>
<dbReference type="BioGRID" id="114378">
    <property type="interactions" value="40"/>
</dbReference>
<dbReference type="CORUM" id="O43150"/>
<dbReference type="FunCoup" id="O43150">
    <property type="interactions" value="1745"/>
</dbReference>
<dbReference type="IntAct" id="O43150">
    <property type="interactions" value="26"/>
</dbReference>
<dbReference type="MINT" id="O43150"/>
<dbReference type="STRING" id="9606.ENSP00000281419"/>
<dbReference type="GlyGen" id="O43150">
    <property type="glycosylation" value="2 sites, 1 O-linked glycan (1 site)"/>
</dbReference>
<dbReference type="iPTMnet" id="O43150"/>
<dbReference type="PhosphoSitePlus" id="O43150"/>
<dbReference type="BioMuta" id="ASAP2"/>
<dbReference type="jPOST" id="O43150"/>
<dbReference type="MassIVE" id="O43150"/>
<dbReference type="PaxDb" id="9606-ENSP00000281419"/>
<dbReference type="PeptideAtlas" id="O43150"/>
<dbReference type="ProteomicsDB" id="48770">
    <molecule id="O43150-1"/>
</dbReference>
<dbReference type="ProteomicsDB" id="48771">
    <molecule id="O43150-2"/>
</dbReference>
<dbReference type="Pumba" id="O43150"/>
<dbReference type="ABCD" id="O43150">
    <property type="antibodies" value="1 sequenced antibody"/>
</dbReference>
<dbReference type="Antibodypedia" id="4352">
    <property type="antibodies" value="106 antibodies from 29 providers"/>
</dbReference>
<dbReference type="DNASU" id="8853"/>
<dbReference type="Ensembl" id="ENST00000281419.8">
    <molecule id="O43150-1"/>
    <property type="protein sequence ID" value="ENSP00000281419.3"/>
    <property type="gene ID" value="ENSG00000151693.11"/>
</dbReference>
<dbReference type="Ensembl" id="ENST00000315273.4">
    <molecule id="O43150-2"/>
    <property type="protein sequence ID" value="ENSP00000316404.4"/>
    <property type="gene ID" value="ENSG00000151693.11"/>
</dbReference>
<dbReference type="GeneID" id="8853"/>
<dbReference type="KEGG" id="hsa:8853"/>
<dbReference type="MANE-Select" id="ENST00000281419.8">
    <property type="protein sequence ID" value="ENSP00000281419.3"/>
    <property type="RefSeq nucleotide sequence ID" value="NM_003887.3"/>
    <property type="RefSeq protein sequence ID" value="NP_003878.1"/>
</dbReference>
<dbReference type="UCSC" id="uc002qzh.3">
    <molecule id="O43150-1"/>
    <property type="organism name" value="human"/>
</dbReference>
<dbReference type="AGR" id="HGNC:2721"/>
<dbReference type="CTD" id="8853"/>
<dbReference type="DisGeNET" id="8853"/>
<dbReference type="GeneCards" id="ASAP2"/>
<dbReference type="HGNC" id="HGNC:2721">
    <property type="gene designation" value="ASAP2"/>
</dbReference>
<dbReference type="HPA" id="ENSG00000151693">
    <property type="expression patterns" value="Tissue enhanced (testis)"/>
</dbReference>
<dbReference type="MIM" id="603817">
    <property type="type" value="gene"/>
</dbReference>
<dbReference type="neXtProt" id="NX_O43150"/>
<dbReference type="OpenTargets" id="ENSG00000151693"/>
<dbReference type="PharmGKB" id="PA164716118"/>
<dbReference type="VEuPathDB" id="HostDB:ENSG00000151693"/>
<dbReference type="eggNOG" id="KOG0521">
    <property type="taxonomic scope" value="Eukaryota"/>
</dbReference>
<dbReference type="GeneTree" id="ENSGT00940000155623"/>
<dbReference type="HOGENOM" id="CLU_006942_0_0_1"/>
<dbReference type="InParanoid" id="O43150"/>
<dbReference type="OMA" id="ILMKMEC"/>
<dbReference type="OrthoDB" id="435430at2759"/>
<dbReference type="PAN-GO" id="O43150">
    <property type="GO annotations" value="1 GO annotation based on evolutionary models"/>
</dbReference>
<dbReference type="PhylomeDB" id="O43150"/>
<dbReference type="TreeFam" id="TF325156"/>
<dbReference type="PathwayCommons" id="O43150"/>
<dbReference type="SignaLink" id="O43150"/>
<dbReference type="SIGNOR" id="O43150"/>
<dbReference type="BioGRID-ORCS" id="8853">
    <property type="hits" value="14 hits in 1170 CRISPR screens"/>
</dbReference>
<dbReference type="ChiTaRS" id="ASAP2">
    <property type="organism name" value="human"/>
</dbReference>
<dbReference type="GeneWiki" id="DDEF2"/>
<dbReference type="GenomeRNAi" id="8853"/>
<dbReference type="Pharos" id="O43150">
    <property type="development level" value="Tbio"/>
</dbReference>
<dbReference type="PRO" id="PR:O43150"/>
<dbReference type="Proteomes" id="UP000005640">
    <property type="component" value="Chromosome 2"/>
</dbReference>
<dbReference type="RNAct" id="O43150">
    <property type="molecule type" value="protein"/>
</dbReference>
<dbReference type="Bgee" id="ENSG00000151693">
    <property type="expression patterns" value="Expressed in secondary oocyte and 211 other cell types or tissues"/>
</dbReference>
<dbReference type="ExpressionAtlas" id="O43150">
    <property type="expression patterns" value="baseline and differential"/>
</dbReference>
<dbReference type="GO" id="GO:0005829">
    <property type="term" value="C:cytosol"/>
    <property type="evidence" value="ECO:0000314"/>
    <property type="project" value="HPA"/>
</dbReference>
<dbReference type="GO" id="GO:0032580">
    <property type="term" value="C:Golgi cisterna membrane"/>
    <property type="evidence" value="ECO:0007669"/>
    <property type="project" value="UniProtKB-SubCell"/>
</dbReference>
<dbReference type="GO" id="GO:0005886">
    <property type="term" value="C:plasma membrane"/>
    <property type="evidence" value="ECO:0000314"/>
    <property type="project" value="HPA"/>
</dbReference>
<dbReference type="GO" id="GO:0005096">
    <property type="term" value="F:GTPase activator activity"/>
    <property type="evidence" value="ECO:0000318"/>
    <property type="project" value="GO_Central"/>
</dbReference>
<dbReference type="GO" id="GO:0046872">
    <property type="term" value="F:metal ion binding"/>
    <property type="evidence" value="ECO:0007669"/>
    <property type="project" value="UniProtKB-KW"/>
</dbReference>
<dbReference type="CDD" id="cd08849">
    <property type="entry name" value="ArfGap_ASAP2"/>
    <property type="match status" value="1"/>
</dbReference>
<dbReference type="CDD" id="cd07642">
    <property type="entry name" value="BAR_ASAP2"/>
    <property type="match status" value="1"/>
</dbReference>
<dbReference type="CDD" id="cd13251">
    <property type="entry name" value="PH_ASAP"/>
    <property type="match status" value="1"/>
</dbReference>
<dbReference type="CDD" id="cd11966">
    <property type="entry name" value="SH3_ASAP2"/>
    <property type="match status" value="1"/>
</dbReference>
<dbReference type="FunFam" id="1.20.1270.60:FF:000004">
    <property type="entry name" value="Arf-GAP with SH3 domain, ANK repeat and PH domain-containing protein 1"/>
    <property type="match status" value="1"/>
</dbReference>
<dbReference type="FunFam" id="1.25.40.950:FF:000001">
    <property type="entry name" value="Arf-GAP with SH3 domain, ANK repeat and PH domain-containing protein 1"/>
    <property type="match status" value="1"/>
</dbReference>
<dbReference type="FunFam" id="1.10.220.150:FF:000002">
    <property type="entry name" value="arf-GAP with SH3 domain, ANK repeat and PH domain-containing protein 1"/>
    <property type="match status" value="1"/>
</dbReference>
<dbReference type="FunFam" id="1.25.40.20:FF:000006">
    <property type="entry name" value="Arf-GAP with SH3 domain, ANK repeat and PH domain-containing protein 2"/>
    <property type="match status" value="1"/>
</dbReference>
<dbReference type="FunFam" id="2.30.29.30:FF:000012">
    <property type="entry name" value="Arf-GAP with SH3 domain, ANK repeat and PH domain-containing protein 2"/>
    <property type="match status" value="1"/>
</dbReference>
<dbReference type="FunFam" id="2.30.30.40:FF:000012">
    <property type="entry name" value="Arf-GAP with SH3 domain, ANK repeat and PH domain-containing protein 2"/>
    <property type="match status" value="1"/>
</dbReference>
<dbReference type="Gene3D" id="1.25.40.950">
    <property type="match status" value="1"/>
</dbReference>
<dbReference type="Gene3D" id="1.25.40.20">
    <property type="entry name" value="Ankyrin repeat-containing domain"/>
    <property type="match status" value="1"/>
</dbReference>
<dbReference type="Gene3D" id="1.10.220.150">
    <property type="entry name" value="Arf GTPase activating protein"/>
    <property type="match status" value="1"/>
</dbReference>
<dbReference type="Gene3D" id="1.20.1270.60">
    <property type="entry name" value="Arfaptin homology (AH) domain/BAR domain"/>
    <property type="match status" value="1"/>
</dbReference>
<dbReference type="Gene3D" id="2.30.29.30">
    <property type="entry name" value="Pleckstrin-homology domain (PH domain)/Phosphotyrosine-binding domain (PTB)"/>
    <property type="match status" value="1"/>
</dbReference>
<dbReference type="Gene3D" id="2.30.30.40">
    <property type="entry name" value="SH3 Domains"/>
    <property type="match status" value="1"/>
</dbReference>
<dbReference type="InterPro" id="IPR027267">
    <property type="entry name" value="AH/BAR_dom_sf"/>
</dbReference>
<dbReference type="InterPro" id="IPR002110">
    <property type="entry name" value="Ankyrin_rpt"/>
</dbReference>
<dbReference type="InterPro" id="IPR036770">
    <property type="entry name" value="Ankyrin_rpt-contain_sf"/>
</dbReference>
<dbReference type="InterPro" id="IPR037278">
    <property type="entry name" value="ARFGAP/RecO"/>
</dbReference>
<dbReference type="InterPro" id="IPR001164">
    <property type="entry name" value="ArfGAP_dom"/>
</dbReference>
<dbReference type="InterPro" id="IPR038508">
    <property type="entry name" value="ArfGAP_dom_sf"/>
</dbReference>
<dbReference type="InterPro" id="IPR043593">
    <property type="entry name" value="ASAP"/>
</dbReference>
<dbReference type="InterPro" id="IPR035677">
    <property type="entry name" value="ASAP2_SH3"/>
</dbReference>
<dbReference type="InterPro" id="IPR004148">
    <property type="entry name" value="BAR_dom"/>
</dbReference>
<dbReference type="InterPro" id="IPR011993">
    <property type="entry name" value="PH-like_dom_sf"/>
</dbReference>
<dbReference type="InterPro" id="IPR037844">
    <property type="entry name" value="PH_ASAP"/>
</dbReference>
<dbReference type="InterPro" id="IPR001849">
    <property type="entry name" value="PH_domain"/>
</dbReference>
<dbReference type="InterPro" id="IPR036028">
    <property type="entry name" value="SH3-like_dom_sf"/>
</dbReference>
<dbReference type="InterPro" id="IPR001452">
    <property type="entry name" value="SH3_domain"/>
</dbReference>
<dbReference type="PANTHER" id="PTHR45854:SF4">
    <property type="entry name" value="ARF-GAP WITH SH3 DOMAIN, ANK REPEAT AND PH DOMAIN-CONTAINING PROTEIN 2"/>
    <property type="match status" value="1"/>
</dbReference>
<dbReference type="PANTHER" id="PTHR45854">
    <property type="entry name" value="ASAP FAMILY MEMBER"/>
    <property type="match status" value="1"/>
</dbReference>
<dbReference type="Pfam" id="PF12796">
    <property type="entry name" value="Ank_2"/>
    <property type="match status" value="1"/>
</dbReference>
<dbReference type="Pfam" id="PF01412">
    <property type="entry name" value="ArfGap"/>
    <property type="match status" value="1"/>
</dbReference>
<dbReference type="Pfam" id="PF16746">
    <property type="entry name" value="BAR_3"/>
    <property type="match status" value="1"/>
</dbReference>
<dbReference type="Pfam" id="PF00169">
    <property type="entry name" value="PH"/>
    <property type="match status" value="1"/>
</dbReference>
<dbReference type="Pfam" id="PF14604">
    <property type="entry name" value="SH3_9"/>
    <property type="match status" value="1"/>
</dbReference>
<dbReference type="PRINTS" id="PR00405">
    <property type="entry name" value="REVINTRACTNG"/>
</dbReference>
<dbReference type="SMART" id="SM00248">
    <property type="entry name" value="ANK"/>
    <property type="match status" value="3"/>
</dbReference>
<dbReference type="SMART" id="SM00105">
    <property type="entry name" value="ArfGap"/>
    <property type="match status" value="1"/>
</dbReference>
<dbReference type="SMART" id="SM00233">
    <property type="entry name" value="PH"/>
    <property type="match status" value="1"/>
</dbReference>
<dbReference type="SMART" id="SM00326">
    <property type="entry name" value="SH3"/>
    <property type="match status" value="1"/>
</dbReference>
<dbReference type="SUPFAM" id="SSF48403">
    <property type="entry name" value="Ankyrin repeat"/>
    <property type="match status" value="1"/>
</dbReference>
<dbReference type="SUPFAM" id="SSF57863">
    <property type="entry name" value="ArfGap/RecO-like zinc finger"/>
    <property type="match status" value="1"/>
</dbReference>
<dbReference type="SUPFAM" id="SSF103657">
    <property type="entry name" value="BAR/IMD domain-like"/>
    <property type="match status" value="1"/>
</dbReference>
<dbReference type="SUPFAM" id="SSF50729">
    <property type="entry name" value="PH domain-like"/>
    <property type="match status" value="1"/>
</dbReference>
<dbReference type="SUPFAM" id="SSF50044">
    <property type="entry name" value="SH3-domain"/>
    <property type="match status" value="1"/>
</dbReference>
<dbReference type="PROSITE" id="PS50297">
    <property type="entry name" value="ANK_REP_REGION"/>
    <property type="match status" value="1"/>
</dbReference>
<dbReference type="PROSITE" id="PS50088">
    <property type="entry name" value="ANK_REPEAT"/>
    <property type="match status" value="1"/>
</dbReference>
<dbReference type="PROSITE" id="PS50115">
    <property type="entry name" value="ARFGAP"/>
    <property type="match status" value="1"/>
</dbReference>
<dbReference type="PROSITE" id="PS50003">
    <property type="entry name" value="PH_DOMAIN"/>
    <property type="match status" value="1"/>
</dbReference>
<dbReference type="PROSITE" id="PS50002">
    <property type="entry name" value="SH3"/>
    <property type="match status" value="1"/>
</dbReference>
<proteinExistence type="evidence at protein level"/>
<protein>
    <recommendedName>
        <fullName>Arf-GAP with SH3 domain, ANK repeat and PH domain-containing protein 2</fullName>
    </recommendedName>
    <alternativeName>
        <fullName>Development and differentiation-enhancing factor 2</fullName>
    </alternativeName>
    <alternativeName>
        <fullName>Paxillin-associated protein with ARF GAP activity 3</fullName>
        <shortName>PAG3</shortName>
    </alternativeName>
    <alternativeName>
        <fullName>Pyk2 C-terminus-associated protein</fullName>
        <shortName>PAP</shortName>
    </alternativeName>
</protein>
<organism>
    <name type="scientific">Homo sapiens</name>
    <name type="common">Human</name>
    <dbReference type="NCBI Taxonomy" id="9606"/>
    <lineage>
        <taxon>Eukaryota</taxon>
        <taxon>Metazoa</taxon>
        <taxon>Chordata</taxon>
        <taxon>Craniata</taxon>
        <taxon>Vertebrata</taxon>
        <taxon>Euteleostomi</taxon>
        <taxon>Mammalia</taxon>
        <taxon>Eutheria</taxon>
        <taxon>Euarchontoglires</taxon>
        <taxon>Primates</taxon>
        <taxon>Haplorrhini</taxon>
        <taxon>Catarrhini</taxon>
        <taxon>Hominidae</taxon>
        <taxon>Homo</taxon>
    </lineage>
</organism>
<reference key="1">
    <citation type="journal article" date="1997" name="DNA Res.">
        <title>Prediction of the coding sequences of unidentified human genes. VIII. 78 new cDNA clones from brain which code for large proteins in vitro.</title>
        <authorList>
            <person name="Ishikawa K."/>
            <person name="Nagase T."/>
            <person name="Nakajima D."/>
            <person name="Seki N."/>
            <person name="Ohira M."/>
            <person name="Miyajima N."/>
            <person name="Tanaka A."/>
            <person name="Kotani H."/>
            <person name="Nomura N."/>
            <person name="Ohara O."/>
        </authorList>
    </citation>
    <scope>NUCLEOTIDE SEQUENCE [LARGE SCALE MRNA] (ISOFORM 1)</scope>
    <source>
        <tissue>Brain</tissue>
    </source>
</reference>
<reference key="2">
    <citation type="submission" date="2005-09" db="EMBL/GenBank/DDBJ databases">
        <authorList>
            <person name="Mural R.J."/>
            <person name="Istrail S."/>
            <person name="Sutton G.G."/>
            <person name="Florea L."/>
            <person name="Halpern A.L."/>
            <person name="Mobarry C.M."/>
            <person name="Lippert R."/>
            <person name="Walenz B."/>
            <person name="Shatkay H."/>
            <person name="Dew I."/>
            <person name="Miller J.R."/>
            <person name="Flanigan M.J."/>
            <person name="Edwards N.J."/>
            <person name="Bolanos R."/>
            <person name="Fasulo D."/>
            <person name="Halldorsson B.V."/>
            <person name="Hannenhalli S."/>
            <person name="Turner R."/>
            <person name="Yooseph S."/>
            <person name="Lu F."/>
            <person name="Nusskern D.R."/>
            <person name="Shue B.C."/>
            <person name="Zheng X.H."/>
            <person name="Zhong F."/>
            <person name="Delcher A.L."/>
            <person name="Huson D.H."/>
            <person name="Kravitz S.A."/>
            <person name="Mouchard L."/>
            <person name="Reinert K."/>
            <person name="Remington K.A."/>
            <person name="Clark A.G."/>
            <person name="Waterman M.S."/>
            <person name="Eichler E.E."/>
            <person name="Adams M.D."/>
            <person name="Hunkapiller M.W."/>
            <person name="Myers E.W."/>
            <person name="Venter J.C."/>
        </authorList>
    </citation>
    <scope>NUCLEOTIDE SEQUENCE [LARGE SCALE GENOMIC DNA]</scope>
</reference>
<reference key="3">
    <citation type="journal article" date="2004" name="Genome Res.">
        <title>The status, quality, and expansion of the NIH full-length cDNA project: the Mammalian Gene Collection (MGC).</title>
        <authorList>
            <consortium name="The MGC Project Team"/>
        </authorList>
    </citation>
    <scope>NUCLEOTIDE SEQUENCE [LARGE SCALE MRNA] (ISOFORM 2)</scope>
    <scope>VARIANT ASP-748</scope>
    <source>
        <tissue>Placenta</tissue>
    </source>
</reference>
<reference key="4">
    <citation type="journal article" date="1999" name="Mol. Cell. Biol.">
        <title>Identification of a new Pyk2 target protein with Arf-GAP activity.</title>
        <authorList>
            <person name="Andreev J."/>
            <person name="Simon J.-P."/>
            <person name="Sabatini D.D."/>
            <person name="Kam J."/>
            <person name="Plowman G."/>
            <person name="Randazzo P.A."/>
            <person name="Schlessinger J."/>
        </authorList>
    </citation>
    <scope>FUNCTION</scope>
    <scope>PHOSPHORYLATION</scope>
    <scope>INTERACTION WITH ARF1; ARF5; ARF6; PTK2B AND SRC</scope>
    <scope>SUBCELLULAR LOCATION</scope>
    <scope>TISSUE SPECIFICITY</scope>
    <scope>ALTERNATIVE SPLICING</scope>
</reference>
<reference key="5">
    <citation type="journal article" date="2000" name="Mol. Biol. Cell">
        <title>A new paxillin-binding protein, PAG3/Papalpha/KIAA0400, bearing an ADP-ribosylation factor GTPase-activating protein activity, is involved in paxillin recruitment to focal adhesions and cell migration.</title>
        <authorList>
            <person name="Kondo A."/>
            <person name="Hashimoto S."/>
            <person name="Yano H."/>
            <person name="Nagayama K."/>
            <person name="Mazaki Y."/>
            <person name="Sabe H."/>
        </authorList>
    </citation>
    <scope>FUNCTION</scope>
    <scope>MUTAGENESIS OF CYS-436</scope>
    <scope>SUBCELLULAR LOCATION</scope>
    <scope>INTERACTION WITH PXN</scope>
</reference>
<reference key="6">
    <citation type="journal article" date="2001" name="J. Exp. Med.">
        <title>PAG3/Papalpha/KIAA0400, a GTPase-activating protein for ADP-ribosylation factor (ARF), regulates ARF6 in Fcgamma receptor-mediated phagocytosis of macrophages.</title>
        <authorList>
            <person name="Uchida H."/>
            <person name="Kondo A."/>
            <person name="Yoshimura Y."/>
            <person name="Mazaki Y."/>
            <person name="Sabe H."/>
        </authorList>
    </citation>
    <scope>FUNCTION</scope>
    <scope>SUBCELLULAR LOCATION</scope>
    <scope>INTERACTION WITH ARF6 AND ACTIN FILAMENTS</scope>
</reference>
<reference key="7">
    <citation type="journal article" date="2006" name="Cell">
        <title>Global, in vivo, and site-specific phosphorylation dynamics in signaling networks.</title>
        <authorList>
            <person name="Olsen J.V."/>
            <person name="Blagoev B."/>
            <person name="Gnad F."/>
            <person name="Macek B."/>
            <person name="Kumar C."/>
            <person name="Mortensen P."/>
            <person name="Mann M."/>
        </authorList>
    </citation>
    <scope>PHOSPHORYLATION [LARGE SCALE ANALYSIS] AT SER-701</scope>
    <scope>IDENTIFICATION BY MASS SPECTROMETRY [LARGE SCALE ANALYSIS]</scope>
    <source>
        <tissue>Cervix carcinoma</tissue>
    </source>
</reference>
<reference key="8">
    <citation type="journal article" date="2008" name="J. Proteome Res.">
        <title>Phosphoproteome of resting human platelets.</title>
        <authorList>
            <person name="Zahedi R.P."/>
            <person name="Lewandrowski U."/>
            <person name="Wiesner J."/>
            <person name="Wortelkamp S."/>
            <person name="Moebius J."/>
            <person name="Schuetz C."/>
            <person name="Walter U."/>
            <person name="Gambaryan S."/>
            <person name="Sickmann A."/>
        </authorList>
    </citation>
    <scope>PHOSPHORYLATION [LARGE SCALE ANALYSIS] AT SER-701</scope>
    <scope>IDENTIFICATION BY MASS SPECTROMETRY [LARGE SCALE ANALYSIS]</scope>
    <source>
        <tissue>Platelet</tissue>
    </source>
</reference>
<reference key="9">
    <citation type="journal article" date="2008" name="Proc. Natl. Acad. Sci. U.S.A.">
        <title>A quantitative atlas of mitotic phosphorylation.</title>
        <authorList>
            <person name="Dephoure N."/>
            <person name="Zhou C."/>
            <person name="Villen J."/>
            <person name="Beausoleil S.A."/>
            <person name="Bakalarski C.E."/>
            <person name="Elledge S.J."/>
            <person name="Gygi S.P."/>
        </authorList>
    </citation>
    <scope>PHOSPHORYLATION [LARGE SCALE ANALYSIS] AT SER-822</scope>
    <scope>IDENTIFICATION BY MASS SPECTROMETRY [LARGE SCALE ANALYSIS]</scope>
    <source>
        <tissue>Cervix carcinoma</tissue>
    </source>
</reference>
<reference key="10">
    <citation type="journal article" date="2010" name="Sci. Signal.">
        <title>Quantitative phosphoproteomics reveals widespread full phosphorylation site occupancy during mitosis.</title>
        <authorList>
            <person name="Olsen J.V."/>
            <person name="Vermeulen M."/>
            <person name="Santamaria A."/>
            <person name="Kumar C."/>
            <person name="Miller M.L."/>
            <person name="Jensen L.J."/>
            <person name="Gnad F."/>
            <person name="Cox J."/>
            <person name="Jensen T.S."/>
            <person name="Nigg E.A."/>
            <person name="Brunak S."/>
            <person name="Mann M."/>
        </authorList>
    </citation>
    <scope>PHOSPHORYLATION [LARGE SCALE ANALYSIS] AT SER-701</scope>
    <scope>IDENTIFICATION BY MASS SPECTROMETRY [LARGE SCALE ANALYSIS]</scope>
    <source>
        <tissue>Cervix carcinoma</tissue>
    </source>
</reference>
<reference key="11">
    <citation type="journal article" date="2011" name="Sci. Signal.">
        <title>System-wide temporal characterization of the proteome and phosphoproteome of human embryonic stem cell differentiation.</title>
        <authorList>
            <person name="Rigbolt K.T."/>
            <person name="Prokhorova T.A."/>
            <person name="Akimov V."/>
            <person name="Henningsen J."/>
            <person name="Johansen P.T."/>
            <person name="Kratchmarova I."/>
            <person name="Kassem M."/>
            <person name="Mann M."/>
            <person name="Olsen J.V."/>
            <person name="Blagoev B."/>
        </authorList>
    </citation>
    <scope>PHOSPHORYLATION [LARGE SCALE ANALYSIS] AT SER-701 AND THR-903</scope>
    <scope>IDENTIFICATION BY MASS SPECTROMETRY [LARGE SCALE ANALYSIS]</scope>
</reference>
<reference key="12">
    <citation type="journal article" date="2013" name="J. Proteome Res.">
        <title>Toward a comprehensive characterization of a human cancer cell phosphoproteome.</title>
        <authorList>
            <person name="Zhou H."/>
            <person name="Di Palma S."/>
            <person name="Preisinger C."/>
            <person name="Peng M."/>
            <person name="Polat A.N."/>
            <person name="Heck A.J."/>
            <person name="Mohammed S."/>
        </authorList>
    </citation>
    <scope>PHOSPHORYLATION [LARGE SCALE ANALYSIS] AT SER-701</scope>
    <scope>IDENTIFICATION BY MASS SPECTROMETRY [LARGE SCALE ANALYSIS]</scope>
    <source>
        <tissue>Cervix carcinoma</tissue>
        <tissue>Erythroleukemia</tissue>
    </source>
</reference>
<sequence length="1006" mass="111651">MPDQISVSEFVAETHEDYKAPTASSFTTRTAQCRNTVAAIEEALDVDRMVLYKMKKSVKAINSSGLAHVENEEQYTQALEKFGGNCVCRDDPDLGSAFLKFSVFTKELTALFKNLIQNMNNIISFPLDSLLKGDLKGVKGDLKKPFDKAWKDYETKITKIEKEKKEHAKLHGMIRTEISGAEIAEEMEKERRFFQLQMCEYLLKVNEIKIKKGVDLLQNLIKYFHAQCNFFQDGLKAVESLKPSIETLSTDLHTIKQAQDEERRQLIQLRDILKSALQVEQKEDSQIRQSTAYSLHQPQGNKEHGTERNGSLYKKSDGIRKVWQKRKCSVKNGFLTISHGTANRPPAKLNLLTCQVKTNPEEKKCFDLISHDRTYHFQAEDEQECQIWMSVLQNSKEEALNNAFKGDDNTGENNIVQELTKEIISEVQRMTGNDVCCDCGAPDPTWLSTNLGILTCIECSGIHRELGVHYSRMQSLTLDVLGTSELLLAKNIGNAGFNEIMECCLPAEDSVKPNPGSDMNARKDYITAKYIERRYARKKHADNAAKLHSLCEAVKTRDIFGLLQAYADGVDLTEKIPLANGHEPDETALHLAVRSVDRTSLHIVDFLVQNSGNLDKQTGKGSTALHYCCLTDNAECLKLLLRGKASIEIANESGETPLDIAKRLKHEHCEELLTQALSGRFNSHVHVEYEWRLLHEDLDESDDDMDEKLQPSPNRREDRPISFYQLGSNQLQSNAVSLARDAANLAKEKQRAFMPSILQNETYGALLSGSPPPAQPAAPSTTSAPPLPPRNVGKVQTASSANTLWKTNSVSVDGGSRQRSSSDPPAVHPPLPPLRVTSTNPLTPTPPPPVAKTPSVMEALSQPSKPAPPGISQIRPPPLPPQPPSRLPQKKPAPGADKSTPLTNKGQPRGPVDLSATEALGPLSNAMVLQPPAPMPRKSQATKLKPKRVKALYNCVADNPDELTFSEGDVIIVDGEEDQEWWIGHIDGDPGRKGAFPVSFVHFIAD</sequence>
<comment type="function">
    <text evidence="6 7 8">Activates the small GTPases ARF1, ARF5 and ARF6. Regulates the formation of post-Golgi vesicles and modulates constitutive secretion. Modulates phagocytosis mediated by Fc gamma receptor and ARF6. Modulates PXN recruitment to focal contacts and cell migration.</text>
</comment>
<comment type="subunit">
    <text>Binds PXN, ARF1, ARF5, ARF6, PTK2B and SRC.</text>
</comment>
<comment type="interaction">
    <interactant intactId="EBI-310968">
        <id>O43150</id>
    </interactant>
    <interactant intactId="EBI-401755">
        <id>P62993</id>
        <label>GRB2</label>
    </interactant>
    <organismsDiffer>false</organismsDiffer>
    <experiments>4</experiments>
</comment>
<comment type="interaction">
    <interactant intactId="EBI-310968">
        <id>O43150</id>
    </interactant>
    <interactant intactId="EBI-389883">
        <id>P16333</id>
        <label>NCK1</label>
    </interactant>
    <organismsDiffer>false</organismsDiffer>
    <experiments>2</experiments>
</comment>
<comment type="interaction">
    <interactant intactId="EBI-310968">
        <id>O43150</id>
    </interactant>
    <interactant intactId="EBI-79387">
        <id>P19174</id>
        <label>PLCG1</label>
    </interactant>
    <organismsDiffer>false</organismsDiffer>
    <experiments>3</experiments>
</comment>
<comment type="interaction">
    <interactant intactId="EBI-310968">
        <id>O43150</id>
    </interactant>
    <interactant intactId="EBI-346595">
        <id>Q96B97</id>
        <label>SH3KBP1</label>
    </interactant>
    <organismsDiffer>false</organismsDiffer>
    <experiments>4</experiments>
</comment>
<comment type="interaction">
    <interactant intactId="EBI-310968">
        <id>O43150</id>
    </interactant>
    <interactant intactId="EBI-3390054">
        <id>P0CG48</id>
        <label>UBC</label>
    </interactant>
    <organismsDiffer>false</organismsDiffer>
    <experiments>2</experiments>
</comment>
<comment type="interaction">
    <interactant intactId="EBI-310968">
        <id>O43150</id>
    </interactant>
    <interactant intactId="EBI-10244213">
        <id>Q5JPT6</id>
    </interactant>
    <organismsDiffer>false</organismsDiffer>
    <experiments>3</experiments>
</comment>
<comment type="interaction">
    <interactant intactId="EBI-310968">
        <id>O43150</id>
    </interactant>
    <interactant intactId="EBI-8069633">
        <id>P70039</id>
        <label>apc</label>
    </interactant>
    <organismsDiffer>true</organismsDiffer>
    <experiments>4</experiments>
</comment>
<comment type="subcellular location">
    <subcellularLocation>
        <location>Cytoplasm</location>
    </subcellularLocation>
    <subcellularLocation>
        <location>Golgi apparatus</location>
        <location>Golgi stack membrane</location>
        <topology>Peripheral membrane protein</topology>
    </subcellularLocation>
    <subcellularLocation>
        <location>Cell membrane</location>
        <topology>Peripheral membrane protein</topology>
    </subcellularLocation>
    <text>Colocalizes with F-actin and ARF6 in phagocytic cups.</text>
</comment>
<comment type="alternative products">
    <event type="alternative splicing"/>
    <isoform>
        <id>O43150-1</id>
        <name>1</name>
        <name>PAPalpha</name>
        <sequence type="displayed"/>
    </isoform>
    <isoform>
        <id>O43150-2</id>
        <name>2</name>
        <name>PAPbeta</name>
        <sequence type="described" ref="VSP_009722"/>
    </isoform>
</comment>
<comment type="tissue specificity">
    <text evidence="6">Detected in heart, brain, placenta, kidney, monocytes and pancreas.</text>
</comment>
<comment type="induction">
    <text>Up-regulated during monocytic maturation.</text>
</comment>
<comment type="domain">
    <text>The conserved Arg-464 in the Arf-GAP domain probably becomes part of the active site of bound small GTPases and is necessary for GTP hydrolysis.</text>
</comment>
<comment type="PTM">
    <text evidence="6">Phosphorylated on tyrosine residues by SRC and PTK2B.</text>
</comment>
<comment type="sequence caution" evidence="11">
    <conflict type="erroneous initiation">
        <sequence resource="EMBL-CDS" id="BAA23696"/>
    </conflict>
</comment>
<gene>
    <name type="primary">ASAP2</name>
    <name type="synonym">DDEF2</name>
    <name type="synonym">KIAA0400</name>
</gene>
<accession>O43150</accession>
<accession>D6W4Y8</accession>
<evidence type="ECO:0000255" key="1"/>
<evidence type="ECO:0000255" key="2">
    <source>
        <dbReference type="PROSITE-ProRule" id="PRU00145"/>
    </source>
</evidence>
<evidence type="ECO:0000255" key="3">
    <source>
        <dbReference type="PROSITE-ProRule" id="PRU00192"/>
    </source>
</evidence>
<evidence type="ECO:0000255" key="4">
    <source>
        <dbReference type="PROSITE-ProRule" id="PRU00288"/>
    </source>
</evidence>
<evidence type="ECO:0000256" key="5">
    <source>
        <dbReference type="SAM" id="MobiDB-lite"/>
    </source>
</evidence>
<evidence type="ECO:0000269" key="6">
    <source>
    </source>
</evidence>
<evidence type="ECO:0000269" key="7">
    <source>
    </source>
</evidence>
<evidence type="ECO:0000269" key="8">
    <source>
    </source>
</evidence>
<evidence type="ECO:0000269" key="9">
    <source>
    </source>
</evidence>
<evidence type="ECO:0000303" key="10">
    <source>
    </source>
</evidence>
<evidence type="ECO:0000305" key="11"/>
<evidence type="ECO:0007744" key="12">
    <source>
    </source>
</evidence>
<evidence type="ECO:0007744" key="13">
    <source>
    </source>
</evidence>
<evidence type="ECO:0007744" key="14">
    <source>
    </source>
</evidence>
<evidence type="ECO:0007744" key="15">
    <source>
    </source>
</evidence>
<evidence type="ECO:0007744" key="16">
    <source>
    </source>
</evidence>
<evidence type="ECO:0007744" key="17">
    <source>
    </source>
</evidence>
<name>ASAP2_HUMAN</name>